<name>MIAA_SHEB8</name>
<gene>
    <name evidence="1" type="primary">miaA</name>
    <name type="ordered locus">Shew185_3768</name>
</gene>
<organism>
    <name type="scientific">Shewanella baltica (strain OS185)</name>
    <dbReference type="NCBI Taxonomy" id="402882"/>
    <lineage>
        <taxon>Bacteria</taxon>
        <taxon>Pseudomonadati</taxon>
        <taxon>Pseudomonadota</taxon>
        <taxon>Gammaproteobacteria</taxon>
        <taxon>Alteromonadales</taxon>
        <taxon>Shewanellaceae</taxon>
        <taxon>Shewanella</taxon>
    </lineage>
</organism>
<feature type="chain" id="PRO_1000020656" description="tRNA dimethylallyltransferase">
    <location>
        <begin position="1"/>
        <end position="308"/>
    </location>
</feature>
<feature type="region of interest" description="Interaction with substrate tRNA" evidence="1">
    <location>
        <begin position="39"/>
        <end position="42"/>
    </location>
</feature>
<feature type="region of interest" description="Interaction with substrate tRNA" evidence="1">
    <location>
        <begin position="163"/>
        <end position="167"/>
    </location>
</feature>
<feature type="region of interest" description="Interaction with substrate tRNA" evidence="1">
    <location>
        <begin position="244"/>
        <end position="249"/>
    </location>
</feature>
<feature type="binding site" evidence="1">
    <location>
        <begin position="14"/>
        <end position="21"/>
    </location>
    <ligand>
        <name>ATP</name>
        <dbReference type="ChEBI" id="CHEBI:30616"/>
    </ligand>
</feature>
<feature type="binding site" evidence="1">
    <location>
        <begin position="16"/>
        <end position="21"/>
    </location>
    <ligand>
        <name>substrate</name>
    </ligand>
</feature>
<feature type="site" description="Interaction with substrate tRNA" evidence="1">
    <location>
        <position position="105"/>
    </location>
</feature>
<feature type="site" description="Interaction with substrate tRNA" evidence="1">
    <location>
        <position position="127"/>
    </location>
</feature>
<dbReference type="EC" id="2.5.1.75" evidence="1"/>
<dbReference type="EMBL" id="CP000753">
    <property type="protein sequence ID" value="ABS09892.1"/>
    <property type="molecule type" value="Genomic_DNA"/>
</dbReference>
<dbReference type="RefSeq" id="WP_012090254.1">
    <property type="nucleotide sequence ID" value="NC_009665.1"/>
</dbReference>
<dbReference type="SMR" id="A6WSV3"/>
<dbReference type="KEGG" id="sbm:Shew185_3768"/>
<dbReference type="HOGENOM" id="CLU_032616_0_0_6"/>
<dbReference type="GO" id="GO:0005524">
    <property type="term" value="F:ATP binding"/>
    <property type="evidence" value="ECO:0007669"/>
    <property type="project" value="UniProtKB-UniRule"/>
</dbReference>
<dbReference type="GO" id="GO:0052381">
    <property type="term" value="F:tRNA dimethylallyltransferase activity"/>
    <property type="evidence" value="ECO:0007669"/>
    <property type="project" value="UniProtKB-UniRule"/>
</dbReference>
<dbReference type="GO" id="GO:0006400">
    <property type="term" value="P:tRNA modification"/>
    <property type="evidence" value="ECO:0007669"/>
    <property type="project" value="TreeGrafter"/>
</dbReference>
<dbReference type="FunFam" id="1.10.20.140:FF:000001">
    <property type="entry name" value="tRNA dimethylallyltransferase"/>
    <property type="match status" value="1"/>
</dbReference>
<dbReference type="Gene3D" id="1.10.20.140">
    <property type="match status" value="1"/>
</dbReference>
<dbReference type="Gene3D" id="3.40.50.300">
    <property type="entry name" value="P-loop containing nucleotide triphosphate hydrolases"/>
    <property type="match status" value="1"/>
</dbReference>
<dbReference type="HAMAP" id="MF_00185">
    <property type="entry name" value="IPP_trans"/>
    <property type="match status" value="1"/>
</dbReference>
<dbReference type="InterPro" id="IPR039657">
    <property type="entry name" value="Dimethylallyltransferase"/>
</dbReference>
<dbReference type="InterPro" id="IPR018022">
    <property type="entry name" value="IPT"/>
</dbReference>
<dbReference type="InterPro" id="IPR027417">
    <property type="entry name" value="P-loop_NTPase"/>
</dbReference>
<dbReference type="NCBIfam" id="TIGR00174">
    <property type="entry name" value="miaA"/>
    <property type="match status" value="1"/>
</dbReference>
<dbReference type="PANTHER" id="PTHR11088">
    <property type="entry name" value="TRNA DIMETHYLALLYLTRANSFERASE"/>
    <property type="match status" value="1"/>
</dbReference>
<dbReference type="PANTHER" id="PTHR11088:SF60">
    <property type="entry name" value="TRNA DIMETHYLALLYLTRANSFERASE"/>
    <property type="match status" value="1"/>
</dbReference>
<dbReference type="Pfam" id="PF01715">
    <property type="entry name" value="IPPT"/>
    <property type="match status" value="1"/>
</dbReference>
<dbReference type="SUPFAM" id="SSF52540">
    <property type="entry name" value="P-loop containing nucleoside triphosphate hydrolases"/>
    <property type="match status" value="1"/>
</dbReference>
<evidence type="ECO:0000255" key="1">
    <source>
        <dbReference type="HAMAP-Rule" id="MF_00185"/>
    </source>
</evidence>
<protein>
    <recommendedName>
        <fullName evidence="1">tRNA dimethylallyltransferase</fullName>
        <ecNumber evidence="1">2.5.1.75</ecNumber>
    </recommendedName>
    <alternativeName>
        <fullName evidence="1">Dimethylallyl diphosphate:tRNA dimethylallyltransferase</fullName>
        <shortName evidence="1">DMAPP:tRNA dimethylallyltransferase</shortName>
        <shortName evidence="1">DMATase</shortName>
    </alternativeName>
    <alternativeName>
        <fullName evidence="1">Isopentenyl-diphosphate:tRNA isopentenyltransferase</fullName>
        <shortName evidence="1">IPP transferase</shortName>
        <shortName evidence="1">IPPT</shortName>
        <shortName evidence="1">IPTase</shortName>
    </alternativeName>
</protein>
<sequence>MNKELQPKVIFLMGPTASGKTALALELAEKHNCEIISVDSALIYRGMDIGSAKPSADELARGPHRLIDIRDPSESYSAADFRADAITEIEQIISMGKTPVLVGGTMMYFKALLEGLSPLPSADEAIRAEIQAEADEKGWEALHDQLREIDPVSAERIHPNDPQRLSRALEVYRISGKSMTELTQTKSAPLPYDVVQFAIAPRERKVLHDLIAQRFAIMLKQGFLEEVTELKARGDLHLDLPSMRCVGYRQCWQYLDGEFDYDTMVEKAVAATRQLAKRQLTWLRSWPELNWLESGAEGNLVTLMRQCR</sequence>
<proteinExistence type="inferred from homology"/>
<accession>A6WSV3</accession>
<comment type="function">
    <text evidence="1">Catalyzes the transfer of a dimethylallyl group onto the adenine at position 37 in tRNAs that read codons beginning with uridine, leading to the formation of N6-(dimethylallyl)adenosine (i(6)A).</text>
</comment>
<comment type="catalytic activity">
    <reaction evidence="1">
        <text>adenosine(37) in tRNA + dimethylallyl diphosphate = N(6)-dimethylallyladenosine(37) in tRNA + diphosphate</text>
        <dbReference type="Rhea" id="RHEA:26482"/>
        <dbReference type="Rhea" id="RHEA-COMP:10162"/>
        <dbReference type="Rhea" id="RHEA-COMP:10375"/>
        <dbReference type="ChEBI" id="CHEBI:33019"/>
        <dbReference type="ChEBI" id="CHEBI:57623"/>
        <dbReference type="ChEBI" id="CHEBI:74411"/>
        <dbReference type="ChEBI" id="CHEBI:74415"/>
        <dbReference type="EC" id="2.5.1.75"/>
    </reaction>
</comment>
<comment type="cofactor">
    <cofactor evidence="1">
        <name>Mg(2+)</name>
        <dbReference type="ChEBI" id="CHEBI:18420"/>
    </cofactor>
</comment>
<comment type="subunit">
    <text evidence="1">Monomer.</text>
</comment>
<comment type="similarity">
    <text evidence="1">Belongs to the IPP transferase family.</text>
</comment>
<keyword id="KW-0067">ATP-binding</keyword>
<keyword id="KW-0460">Magnesium</keyword>
<keyword id="KW-0547">Nucleotide-binding</keyword>
<keyword id="KW-0808">Transferase</keyword>
<keyword id="KW-0819">tRNA processing</keyword>
<reference key="1">
    <citation type="submission" date="2007-07" db="EMBL/GenBank/DDBJ databases">
        <title>Complete sequence of chromosome of Shewanella baltica OS185.</title>
        <authorList>
            <consortium name="US DOE Joint Genome Institute"/>
            <person name="Copeland A."/>
            <person name="Lucas S."/>
            <person name="Lapidus A."/>
            <person name="Barry K."/>
            <person name="Glavina del Rio T."/>
            <person name="Dalin E."/>
            <person name="Tice H."/>
            <person name="Pitluck S."/>
            <person name="Sims D."/>
            <person name="Brettin T."/>
            <person name="Bruce D."/>
            <person name="Detter J.C."/>
            <person name="Han C."/>
            <person name="Schmutz J."/>
            <person name="Larimer F."/>
            <person name="Land M."/>
            <person name="Hauser L."/>
            <person name="Kyrpides N."/>
            <person name="Mikhailova N."/>
            <person name="Brettar I."/>
            <person name="Rodrigues J."/>
            <person name="Konstantinidis K."/>
            <person name="Tiedje J."/>
            <person name="Richardson P."/>
        </authorList>
    </citation>
    <scope>NUCLEOTIDE SEQUENCE [LARGE SCALE GENOMIC DNA]</scope>
    <source>
        <strain>OS185</strain>
    </source>
</reference>